<reference key="1">
    <citation type="journal article" date="2006" name="DNA Seq.">
        <title>The complete nucleotide sequence of the mitochondrial genome of Tetraodon nigroviridis.</title>
        <authorList>
            <person name="Yue G.H."/>
            <person name="Lo L.C."/>
            <person name="Zhu Z.Y."/>
            <person name="Lin G."/>
            <person name="Feng F."/>
        </authorList>
    </citation>
    <scope>NUCLEOTIDE SEQUENCE [LARGE SCALE GENOMIC DNA]</scope>
</reference>
<comment type="function">
    <text evidence="1 2">Subunit 8, of the mitochondrial membrane ATP synthase complex (F(1)F(0) ATP synthase or Complex V) that produces ATP from ADP in the presence of a proton gradient across the membrane which is generated by electron transport complexes of the respiratory chain. ATP synthase complex consist of a soluble F(1) head domain - the catalytic core - and a membrane F(1) domain - the membrane proton channel. These two domains are linked by a central stalk rotating inside the F(1) region and a stationary peripheral stalk. During catalysis, ATP synthesis in the catalytic domain of F(1) is coupled via a rotary mechanism of the central stalk subunits to proton translocation (By similarity). In vivo, can only synthesize ATP although its ATP hydrolase activity can be activated artificially in vitro (By similarity). Part of the complex F(0) domain (By similarity).</text>
</comment>
<comment type="subunit">
    <text evidence="1">Component of the ATP synthase complex composed at least of ATP5F1A/subunit alpha, ATP5F1B/subunit beta, ATP5MC1/subunit c (homooctomer), MT-ATP6/subunit a, MT-ATP8/subunit 8, ATP5ME/subunit e, ATP5MF/subunit f, ATP5MG/subunit g, ATP5MK/subunit k, ATP5MJ/subunit j, ATP5F1C/subunit gamma, ATP5F1D/subunit delta, ATP5F1E/subunit epsilon, ATP5PF/subunit F6, ATP5PB/subunit b, ATP5PD/subunit d, ATP5PO/subunit OSCP. ATP synthase complex consists of a soluble F(1) head domain (subunits alpha(3) and beta(3)) - the catalytic core - and a membrane F(0) domain - the membrane proton channel (subunits c, a, 8, e, f, g, k and j). These two domains are linked by a central stalk (subunits gamma, delta, and epsilon) rotating inside the F1 region and a stationary peripheral stalk (subunits F6, b, d, and OSCP).</text>
</comment>
<comment type="subcellular location">
    <subcellularLocation>
        <location>Mitochondrion membrane</location>
        <topology>Single-pass membrane protein</topology>
    </subcellularLocation>
</comment>
<comment type="similarity">
    <text evidence="4">Belongs to the ATPase protein 8 family.</text>
</comment>
<geneLocation type="mitochondrion"/>
<dbReference type="EMBL" id="DQ019313">
    <property type="protein sequence ID" value="AAY26158.1"/>
    <property type="molecule type" value="Genomic_DNA"/>
</dbReference>
<dbReference type="SMR" id="Q4JQI3"/>
<dbReference type="STRING" id="99883.ENSTNIP00000003540"/>
<dbReference type="Ensembl" id="ENSTNIT00000001294.1">
    <property type="protein sequence ID" value="ENSTNIP00000003540.1"/>
    <property type="gene ID" value="ENSTNIG00000001181.1"/>
</dbReference>
<dbReference type="GeneTree" id="ENSGT00400000025179"/>
<dbReference type="HOGENOM" id="CLU_212888_0_0_1"/>
<dbReference type="InParanoid" id="Q4JQI3"/>
<dbReference type="OMA" id="MPQLNPN"/>
<dbReference type="Proteomes" id="UP000007303">
    <property type="component" value="Mitochondrion"/>
</dbReference>
<dbReference type="GO" id="GO:0031966">
    <property type="term" value="C:mitochondrial membrane"/>
    <property type="evidence" value="ECO:0007669"/>
    <property type="project" value="UniProtKB-SubCell"/>
</dbReference>
<dbReference type="GO" id="GO:0045259">
    <property type="term" value="C:proton-transporting ATP synthase complex"/>
    <property type="evidence" value="ECO:0007669"/>
    <property type="project" value="UniProtKB-KW"/>
</dbReference>
<dbReference type="GO" id="GO:0015078">
    <property type="term" value="F:proton transmembrane transporter activity"/>
    <property type="evidence" value="ECO:0007669"/>
    <property type="project" value="InterPro"/>
</dbReference>
<dbReference type="GO" id="GO:0015986">
    <property type="term" value="P:proton motive force-driven ATP synthesis"/>
    <property type="evidence" value="ECO:0007669"/>
    <property type="project" value="InterPro"/>
</dbReference>
<dbReference type="InterPro" id="IPR001421">
    <property type="entry name" value="ATP8_metazoa"/>
</dbReference>
<dbReference type="InterPro" id="IPR050635">
    <property type="entry name" value="ATPase_protein_8"/>
</dbReference>
<dbReference type="PANTHER" id="PTHR39937">
    <property type="entry name" value="ATP SYNTHASE PROTEIN 8"/>
    <property type="match status" value="1"/>
</dbReference>
<dbReference type="PANTHER" id="PTHR39937:SF1">
    <property type="entry name" value="ATP SYNTHASE PROTEIN 8"/>
    <property type="match status" value="1"/>
</dbReference>
<dbReference type="Pfam" id="PF00895">
    <property type="entry name" value="ATP-synt_8"/>
    <property type="match status" value="1"/>
</dbReference>
<gene>
    <name evidence="1" type="primary">mt-atp8</name>
    <name type="synonym">atp8</name>
    <name type="synonym">atpase8</name>
    <name type="synonym">mtatp8</name>
</gene>
<feature type="chain" id="PRO_0000195592" description="ATP synthase F(0) complex subunit 8">
    <location>
        <begin position="1"/>
        <end position="55"/>
    </location>
</feature>
<feature type="transmembrane region" description="Helical" evidence="3">
    <location>
        <begin position="9"/>
        <end position="29"/>
    </location>
</feature>
<organism>
    <name type="scientific">Tetraodon nigroviridis</name>
    <name type="common">Spotted green pufferfish</name>
    <name type="synonym">Chelonodon nigroviridis</name>
    <dbReference type="NCBI Taxonomy" id="99883"/>
    <lineage>
        <taxon>Eukaryota</taxon>
        <taxon>Metazoa</taxon>
        <taxon>Chordata</taxon>
        <taxon>Craniata</taxon>
        <taxon>Vertebrata</taxon>
        <taxon>Euteleostomi</taxon>
        <taxon>Actinopterygii</taxon>
        <taxon>Neopterygii</taxon>
        <taxon>Teleostei</taxon>
        <taxon>Neoteleostei</taxon>
        <taxon>Acanthomorphata</taxon>
        <taxon>Eupercaria</taxon>
        <taxon>Tetraodontiformes</taxon>
        <taxon>Tetradontoidea</taxon>
        <taxon>Tetraodontidae</taxon>
        <taxon>Tetraodon</taxon>
    </lineage>
</organism>
<evidence type="ECO:0000250" key="1">
    <source>
        <dbReference type="UniProtKB" id="P03928"/>
    </source>
</evidence>
<evidence type="ECO:0000250" key="2">
    <source>
        <dbReference type="UniProtKB" id="P19483"/>
    </source>
</evidence>
<evidence type="ECO:0000255" key="3"/>
<evidence type="ECO:0000305" key="4"/>
<name>ATP8_TETNG</name>
<protein>
    <recommendedName>
        <fullName evidence="1">ATP synthase F(0) complex subunit 8</fullName>
    </recommendedName>
    <alternativeName>
        <fullName>A6L</fullName>
    </alternativeName>
    <alternativeName>
        <fullName>F-ATPase subunit 8</fullName>
    </alternativeName>
</protein>
<sequence>MPQLNPSPWFAIMVFSWFVFLIFLPPKIMAHTFPNEPTAQSTQTLKTKSWTWPWH</sequence>
<proteinExistence type="inferred from homology"/>
<keyword id="KW-0066">ATP synthesis</keyword>
<keyword id="KW-0138">CF(0)</keyword>
<keyword id="KW-0375">Hydrogen ion transport</keyword>
<keyword id="KW-0406">Ion transport</keyword>
<keyword id="KW-0472">Membrane</keyword>
<keyword id="KW-0496">Mitochondrion</keyword>
<keyword id="KW-1185">Reference proteome</keyword>
<keyword id="KW-0812">Transmembrane</keyword>
<keyword id="KW-1133">Transmembrane helix</keyword>
<keyword id="KW-0813">Transport</keyword>
<accession>Q4JQI3</accession>